<name>PANC_MYCTO</name>
<keyword id="KW-0002">3D-structure</keyword>
<keyword id="KW-0067">ATP-binding</keyword>
<keyword id="KW-0963">Cytoplasm</keyword>
<keyword id="KW-0436">Ligase</keyword>
<keyword id="KW-0460">Magnesium</keyword>
<keyword id="KW-0479">Metal-binding</keyword>
<keyword id="KW-0547">Nucleotide-binding</keyword>
<keyword id="KW-0566">Pantothenate biosynthesis</keyword>
<keyword id="KW-1185">Reference proteome</keyword>
<reference key="1">
    <citation type="journal article" date="2002" name="J. Bacteriol.">
        <title>Whole-genome comparison of Mycobacterium tuberculosis clinical and laboratory strains.</title>
        <authorList>
            <person name="Fleischmann R.D."/>
            <person name="Alland D."/>
            <person name="Eisen J.A."/>
            <person name="Carpenter L."/>
            <person name="White O."/>
            <person name="Peterson J.D."/>
            <person name="DeBoy R.T."/>
            <person name="Dodson R.J."/>
            <person name="Gwinn M.L."/>
            <person name="Haft D.H."/>
            <person name="Hickey E.K."/>
            <person name="Kolonay J.F."/>
            <person name="Nelson W.C."/>
            <person name="Umayam L.A."/>
            <person name="Ermolaeva M.D."/>
            <person name="Salzberg S.L."/>
            <person name="Delcher A."/>
            <person name="Utterback T.R."/>
            <person name="Weidman J.F."/>
            <person name="Khouri H.M."/>
            <person name="Gill J."/>
            <person name="Mikula A."/>
            <person name="Bishai W."/>
            <person name="Jacobs W.R. Jr."/>
            <person name="Venter J.C."/>
            <person name="Fraser C.M."/>
        </authorList>
    </citation>
    <scope>NUCLEOTIDE SEQUENCE [LARGE SCALE GENOMIC DNA]</scope>
    <source>
        <strain>CDC 1551 / Oshkosh</strain>
    </source>
</reference>
<gene>
    <name type="primary">panC</name>
    <name type="ordered locus">MT3707</name>
</gene>
<comment type="function">
    <text evidence="1">Catalyzes the condensation of pantoate with beta-alanine in an ATP-dependent reaction via a pantoyl-adenylate intermediate.</text>
</comment>
<comment type="catalytic activity">
    <reaction>
        <text>(R)-pantoate + beta-alanine + ATP = (R)-pantothenate + AMP + diphosphate + H(+)</text>
        <dbReference type="Rhea" id="RHEA:10912"/>
        <dbReference type="ChEBI" id="CHEBI:15378"/>
        <dbReference type="ChEBI" id="CHEBI:15980"/>
        <dbReference type="ChEBI" id="CHEBI:29032"/>
        <dbReference type="ChEBI" id="CHEBI:30616"/>
        <dbReference type="ChEBI" id="CHEBI:33019"/>
        <dbReference type="ChEBI" id="CHEBI:57966"/>
        <dbReference type="ChEBI" id="CHEBI:456215"/>
        <dbReference type="EC" id="6.3.2.1"/>
    </reaction>
</comment>
<comment type="pathway">
    <text>Cofactor biosynthesis; (R)-pantothenate biosynthesis; (R)-pantothenate from (R)-pantoate and beta-alanine: step 1/1.</text>
</comment>
<comment type="subcellular location">
    <subcellularLocation>
        <location evidence="2">Cytoplasm</location>
    </subcellularLocation>
</comment>
<comment type="similarity">
    <text evidence="2">Belongs to the pantothenate synthetase family.</text>
</comment>
<dbReference type="EC" id="6.3.2.1"/>
<dbReference type="EMBL" id="AE000516">
    <property type="protein sequence ID" value="AAK48065.1"/>
    <property type="molecule type" value="Genomic_DNA"/>
</dbReference>
<dbReference type="PIR" id="C70955">
    <property type="entry name" value="C70955"/>
</dbReference>
<dbReference type="RefSeq" id="WP_003419526.1">
    <property type="nucleotide sequence ID" value="NZ_KK341227.1"/>
</dbReference>
<dbReference type="PDB" id="4MQ6">
    <property type="method" value="X-ray"/>
    <property type="resolution" value="1.70 A"/>
    <property type="chains" value="A/B=3-309"/>
</dbReference>
<dbReference type="PDB" id="4MUE">
    <property type="method" value="X-ray"/>
    <property type="resolution" value="2.06 A"/>
    <property type="chains" value="A/B=3-300"/>
</dbReference>
<dbReference type="PDB" id="4MUF">
    <property type="method" value="X-ray"/>
    <property type="resolution" value="2.50 A"/>
    <property type="chains" value="A/B=3-300"/>
</dbReference>
<dbReference type="PDB" id="4MUG">
    <property type="method" value="X-ray"/>
    <property type="resolution" value="1.54 A"/>
    <property type="chains" value="A/B=3-300"/>
</dbReference>
<dbReference type="PDB" id="4MUH">
    <property type="method" value="X-ray"/>
    <property type="resolution" value="1.72 A"/>
    <property type="chains" value="A/B=3-300"/>
</dbReference>
<dbReference type="PDB" id="4MUI">
    <property type="method" value="X-ray"/>
    <property type="resolution" value="2.10 A"/>
    <property type="chains" value="A/B=3-300"/>
</dbReference>
<dbReference type="PDB" id="4MUJ">
    <property type="method" value="X-ray"/>
    <property type="resolution" value="1.92 A"/>
    <property type="chains" value="A/B=3-300"/>
</dbReference>
<dbReference type="PDB" id="4MUK">
    <property type="method" value="X-ray"/>
    <property type="resolution" value="1.90 A"/>
    <property type="chains" value="A/B=3-300"/>
</dbReference>
<dbReference type="PDB" id="4MUL">
    <property type="method" value="X-ray"/>
    <property type="resolution" value="1.75 A"/>
    <property type="chains" value="A/B=3-300"/>
</dbReference>
<dbReference type="PDB" id="4MUN">
    <property type="method" value="X-ray"/>
    <property type="resolution" value="1.57 A"/>
    <property type="chains" value="A/B=3-300"/>
</dbReference>
<dbReference type="PDBsum" id="4MQ6"/>
<dbReference type="PDBsum" id="4MUE"/>
<dbReference type="PDBsum" id="4MUF"/>
<dbReference type="PDBsum" id="4MUG"/>
<dbReference type="PDBsum" id="4MUH"/>
<dbReference type="PDBsum" id="4MUI"/>
<dbReference type="PDBsum" id="4MUJ"/>
<dbReference type="PDBsum" id="4MUK"/>
<dbReference type="PDBsum" id="4MUL"/>
<dbReference type="PDBsum" id="4MUN"/>
<dbReference type="SMR" id="P9WIL4"/>
<dbReference type="KEGG" id="mtc:MT3707"/>
<dbReference type="PATRIC" id="fig|83331.31.peg.3990"/>
<dbReference type="HOGENOM" id="CLU_047148_0_2_11"/>
<dbReference type="UniPathway" id="UPA00028">
    <property type="reaction ID" value="UER00005"/>
</dbReference>
<dbReference type="Proteomes" id="UP000001020">
    <property type="component" value="Chromosome"/>
</dbReference>
<dbReference type="GO" id="GO:0005829">
    <property type="term" value="C:cytosol"/>
    <property type="evidence" value="ECO:0007669"/>
    <property type="project" value="TreeGrafter"/>
</dbReference>
<dbReference type="GO" id="GO:0005524">
    <property type="term" value="F:ATP binding"/>
    <property type="evidence" value="ECO:0007669"/>
    <property type="project" value="UniProtKB-KW"/>
</dbReference>
<dbReference type="GO" id="GO:0046872">
    <property type="term" value="F:metal ion binding"/>
    <property type="evidence" value="ECO:0007669"/>
    <property type="project" value="UniProtKB-KW"/>
</dbReference>
<dbReference type="GO" id="GO:0004592">
    <property type="term" value="F:pantoate-beta-alanine ligase activity"/>
    <property type="evidence" value="ECO:0007669"/>
    <property type="project" value="UniProtKB-UniRule"/>
</dbReference>
<dbReference type="GO" id="GO:0015940">
    <property type="term" value="P:pantothenate biosynthetic process"/>
    <property type="evidence" value="ECO:0007669"/>
    <property type="project" value="UniProtKB-UniRule"/>
</dbReference>
<dbReference type="CDD" id="cd00560">
    <property type="entry name" value="PanC"/>
    <property type="match status" value="1"/>
</dbReference>
<dbReference type="FunFam" id="3.30.1300.10:FF:000005">
    <property type="entry name" value="Pantothenate synthetase"/>
    <property type="match status" value="1"/>
</dbReference>
<dbReference type="FunFam" id="3.40.50.620:FF:000114">
    <property type="entry name" value="Pantothenate synthetase"/>
    <property type="match status" value="1"/>
</dbReference>
<dbReference type="Gene3D" id="3.40.50.620">
    <property type="entry name" value="HUPs"/>
    <property type="match status" value="1"/>
</dbReference>
<dbReference type="Gene3D" id="3.30.1300.10">
    <property type="entry name" value="Pantoate-beta-alanine ligase, C-terminal domain"/>
    <property type="match status" value="1"/>
</dbReference>
<dbReference type="HAMAP" id="MF_00158">
    <property type="entry name" value="PanC"/>
    <property type="match status" value="1"/>
</dbReference>
<dbReference type="InterPro" id="IPR003721">
    <property type="entry name" value="Pantoate_ligase"/>
</dbReference>
<dbReference type="InterPro" id="IPR042176">
    <property type="entry name" value="Pantoate_ligase_C"/>
</dbReference>
<dbReference type="InterPro" id="IPR014729">
    <property type="entry name" value="Rossmann-like_a/b/a_fold"/>
</dbReference>
<dbReference type="NCBIfam" id="TIGR00018">
    <property type="entry name" value="panC"/>
    <property type="match status" value="1"/>
</dbReference>
<dbReference type="PANTHER" id="PTHR21299">
    <property type="entry name" value="CYTIDYLATE KINASE/PANTOATE-BETA-ALANINE LIGASE"/>
    <property type="match status" value="1"/>
</dbReference>
<dbReference type="PANTHER" id="PTHR21299:SF1">
    <property type="entry name" value="PANTOATE--BETA-ALANINE LIGASE"/>
    <property type="match status" value="1"/>
</dbReference>
<dbReference type="Pfam" id="PF02569">
    <property type="entry name" value="Pantoate_ligase"/>
    <property type="match status" value="1"/>
</dbReference>
<dbReference type="SUPFAM" id="SSF52374">
    <property type="entry name" value="Nucleotidylyl transferase"/>
    <property type="match status" value="1"/>
</dbReference>
<evidence type="ECO:0000250" key="1"/>
<evidence type="ECO:0000305" key="2"/>
<evidence type="ECO:0007829" key="3">
    <source>
        <dbReference type="PDB" id="4MQ6"/>
    </source>
</evidence>
<evidence type="ECO:0007829" key="4">
    <source>
        <dbReference type="PDB" id="4MUG"/>
    </source>
</evidence>
<proteinExistence type="evidence at protein level"/>
<protein>
    <recommendedName>
        <fullName>Pantothenate synthetase</fullName>
        <shortName>PS</shortName>
        <ecNumber>6.3.2.1</ecNumber>
    </recommendedName>
    <alternativeName>
        <fullName>Pantoate--beta-alanine ligase</fullName>
    </alternativeName>
    <alternativeName>
        <fullName>Pantoate-activating enzyme</fullName>
    </alternativeName>
</protein>
<organism>
    <name type="scientific">Mycobacterium tuberculosis (strain CDC 1551 / Oshkosh)</name>
    <dbReference type="NCBI Taxonomy" id="83331"/>
    <lineage>
        <taxon>Bacteria</taxon>
        <taxon>Bacillati</taxon>
        <taxon>Actinomycetota</taxon>
        <taxon>Actinomycetes</taxon>
        <taxon>Mycobacteriales</taxon>
        <taxon>Mycobacteriaceae</taxon>
        <taxon>Mycobacterium</taxon>
        <taxon>Mycobacterium tuberculosis complex</taxon>
    </lineage>
</organism>
<accession>P9WIL4</accession>
<accession>L0TG74</accession>
<accession>O06280</accession>
<accession>P0A5R0</accession>
<sequence length="309" mass="32678">MTIPAFHPGELNVYSAPGDVADVSRALRLTGRRVMLVPTMGALHEGHLALVRAAKRVPGSVVVVSIFVNPMQFGAGEDLDAYPRTPDDDLAQLRAEGVEIAFTPTTAAMYPDGLRTTVQPGPLAAELEGGPRPTHFAGVLTVVLKLLQIVRPDRVFFGEKDYQQLVLIRQLVADFNLDVAVVGVPTVREADGLAMSSRNRYLDPAQRAAAVALSAALTAAAHAATAGAQAALDAARAVLDAAPGVAVDYLELRDIGLGPMPLNGSGRLLVAARLGTTRLLDNIAIEIGTFAGTDRPDGYRAILESHWRN</sequence>
<feature type="initiator methionine" description="Removed" evidence="1">
    <location>
        <position position="1"/>
    </location>
</feature>
<feature type="chain" id="PRO_0000427985" description="Pantothenate synthetase">
    <location>
        <begin position="2"/>
        <end position="309"/>
    </location>
</feature>
<feature type="active site" description="Proton donor" evidence="1">
    <location>
        <position position="47"/>
    </location>
</feature>
<feature type="binding site" evidence="1">
    <location>
        <begin position="40"/>
        <end position="47"/>
    </location>
    <ligand>
        <name>ATP</name>
        <dbReference type="ChEBI" id="CHEBI:30616"/>
    </ligand>
</feature>
<feature type="binding site" evidence="1">
    <location>
        <position position="72"/>
    </location>
    <ligand>
        <name>(R)-pantoate</name>
        <dbReference type="ChEBI" id="CHEBI:15980"/>
    </ligand>
</feature>
<feature type="binding site" evidence="1">
    <location>
        <position position="72"/>
    </location>
    <ligand>
        <name>beta-alanine</name>
        <dbReference type="ChEBI" id="CHEBI:57966"/>
    </ligand>
</feature>
<feature type="binding site" evidence="1">
    <location>
        <position position="88"/>
    </location>
    <ligand>
        <name>Mg(2+)</name>
        <dbReference type="ChEBI" id="CHEBI:18420"/>
    </ligand>
</feature>
<feature type="binding site" evidence="1">
    <location>
        <position position="89"/>
    </location>
    <ligand>
        <name>Mg(2+)</name>
        <dbReference type="ChEBI" id="CHEBI:18420"/>
    </ligand>
</feature>
<feature type="binding site" evidence="1">
    <location>
        <position position="92"/>
    </location>
    <ligand>
        <name>Mg(2+)</name>
        <dbReference type="ChEBI" id="CHEBI:18420"/>
    </ligand>
</feature>
<feature type="binding site" evidence="1">
    <location>
        <begin position="158"/>
        <end position="161"/>
    </location>
    <ligand>
        <name>ATP</name>
        <dbReference type="ChEBI" id="CHEBI:30616"/>
    </ligand>
</feature>
<feature type="binding site" evidence="1">
    <location>
        <position position="164"/>
    </location>
    <ligand>
        <name>(R)-pantoate</name>
        <dbReference type="ChEBI" id="CHEBI:15980"/>
    </ligand>
</feature>
<feature type="binding site" evidence="1">
    <location>
        <position position="187"/>
    </location>
    <ligand>
        <name>ATP</name>
        <dbReference type="ChEBI" id="CHEBI:30616"/>
    </ligand>
</feature>
<feature type="binding site" evidence="1">
    <location>
        <begin position="195"/>
        <end position="198"/>
    </location>
    <ligand>
        <name>ATP</name>
        <dbReference type="ChEBI" id="CHEBI:30616"/>
    </ligand>
</feature>
<feature type="strand" evidence="4">
    <location>
        <begin position="12"/>
        <end position="14"/>
    </location>
</feature>
<feature type="helix" evidence="4">
    <location>
        <begin position="17"/>
        <end position="29"/>
    </location>
</feature>
<feature type="strand" evidence="4">
    <location>
        <begin position="33"/>
        <end position="39"/>
    </location>
</feature>
<feature type="helix" evidence="4">
    <location>
        <begin position="45"/>
        <end position="55"/>
    </location>
</feature>
<feature type="strand" evidence="4">
    <location>
        <begin position="60"/>
        <end position="66"/>
    </location>
</feature>
<feature type="helix" evidence="4">
    <location>
        <begin position="70"/>
        <end position="72"/>
    </location>
</feature>
<feature type="strand" evidence="4">
    <location>
        <begin position="75"/>
        <end position="77"/>
    </location>
</feature>
<feature type="helix" evidence="4">
    <location>
        <begin position="78"/>
        <end position="81"/>
    </location>
</feature>
<feature type="helix" evidence="4">
    <location>
        <begin position="86"/>
        <end position="95"/>
    </location>
</feature>
<feature type="strand" evidence="4">
    <location>
        <begin position="100"/>
        <end position="102"/>
    </location>
</feature>
<feature type="helix" evidence="4">
    <location>
        <begin position="106"/>
        <end position="109"/>
    </location>
</feature>
<feature type="strand" evidence="4">
    <location>
        <begin position="116"/>
        <end position="119"/>
    </location>
</feature>
<feature type="helix" evidence="4">
    <location>
        <begin position="122"/>
        <end position="125"/>
    </location>
</feature>
<feature type="helix" evidence="4">
    <location>
        <begin position="127"/>
        <end position="129"/>
    </location>
</feature>
<feature type="helix" evidence="4">
    <location>
        <begin position="135"/>
        <end position="150"/>
    </location>
</feature>
<feature type="strand" evidence="4">
    <location>
        <begin position="153"/>
        <end position="161"/>
    </location>
</feature>
<feature type="helix" evidence="4">
    <location>
        <begin position="162"/>
        <end position="174"/>
    </location>
</feature>
<feature type="strand" evidence="4">
    <location>
        <begin position="180"/>
        <end position="184"/>
    </location>
</feature>
<feature type="helix" evidence="4">
    <location>
        <begin position="199"/>
        <end position="201"/>
    </location>
</feature>
<feature type="helix" evidence="4">
    <location>
        <begin position="204"/>
        <end position="209"/>
    </location>
</feature>
<feature type="helix" evidence="4">
    <location>
        <begin position="212"/>
        <end position="223"/>
    </location>
</feature>
<feature type="helix" evidence="4">
    <location>
        <begin position="224"/>
        <end position="226"/>
    </location>
</feature>
<feature type="helix" evidence="4">
    <location>
        <begin position="228"/>
        <end position="240"/>
    </location>
</feature>
<feature type="strand" evidence="4">
    <location>
        <begin position="246"/>
        <end position="254"/>
    </location>
</feature>
<feature type="strand" evidence="4">
    <location>
        <begin position="258"/>
        <end position="260"/>
    </location>
</feature>
<feature type="strand" evidence="4">
    <location>
        <begin position="264"/>
        <end position="274"/>
    </location>
</feature>
<feature type="strand" evidence="4">
    <location>
        <begin position="277"/>
        <end position="286"/>
    </location>
</feature>
<feature type="helix" evidence="3">
    <location>
        <begin position="288"/>
        <end position="290"/>
    </location>
</feature>